<reference key="1">
    <citation type="journal article" date="2009" name="Appl. Environ. Microbiol.">
        <title>Genomic analysis of 'Elusimicrobium minutum,' the first cultivated representative of the phylum 'Elusimicrobia' (formerly termite group 1).</title>
        <authorList>
            <person name="Herlemann D.P.R."/>
            <person name="Geissinger O."/>
            <person name="Ikeda-Ohtsubo W."/>
            <person name="Kunin V."/>
            <person name="Sun H."/>
            <person name="Lapidus A."/>
            <person name="Hugenholtz P."/>
            <person name="Brune A."/>
        </authorList>
    </citation>
    <scope>NUCLEOTIDE SEQUENCE [LARGE SCALE GENOMIC DNA]</scope>
    <source>
        <strain>Pei191</strain>
    </source>
</reference>
<feature type="chain" id="PRO_1000143380" description="ATP synthase subunit alpha">
    <location>
        <begin position="1"/>
        <end position="512"/>
    </location>
</feature>
<feature type="binding site" evidence="1">
    <location>
        <begin position="169"/>
        <end position="176"/>
    </location>
    <ligand>
        <name>ATP</name>
        <dbReference type="ChEBI" id="CHEBI:30616"/>
    </ligand>
</feature>
<feature type="site" description="Required for activity" evidence="1">
    <location>
        <position position="366"/>
    </location>
</feature>
<accession>B2KEX0</accession>
<gene>
    <name evidence="1" type="primary">atpA</name>
    <name type="ordered locus">Emin_1519</name>
</gene>
<protein>
    <recommendedName>
        <fullName evidence="1">ATP synthase subunit alpha</fullName>
        <ecNumber evidence="1">7.1.2.2</ecNumber>
    </recommendedName>
    <alternativeName>
        <fullName evidence="1">ATP synthase F1 sector subunit alpha</fullName>
    </alternativeName>
    <alternativeName>
        <fullName evidence="1">F-ATPase subunit alpha</fullName>
    </alternativeName>
</protein>
<keyword id="KW-0066">ATP synthesis</keyword>
<keyword id="KW-0067">ATP-binding</keyword>
<keyword id="KW-1003">Cell membrane</keyword>
<keyword id="KW-0139">CF(1)</keyword>
<keyword id="KW-0375">Hydrogen ion transport</keyword>
<keyword id="KW-0406">Ion transport</keyword>
<keyword id="KW-0472">Membrane</keyword>
<keyword id="KW-0547">Nucleotide-binding</keyword>
<keyword id="KW-1185">Reference proteome</keyword>
<keyword id="KW-1278">Translocase</keyword>
<keyword id="KW-0813">Transport</keyword>
<dbReference type="EC" id="7.1.2.2" evidence="1"/>
<dbReference type="EMBL" id="CP001055">
    <property type="protein sequence ID" value="ACC99066.1"/>
    <property type="molecule type" value="Genomic_DNA"/>
</dbReference>
<dbReference type="RefSeq" id="WP_012415680.1">
    <property type="nucleotide sequence ID" value="NC_010644.1"/>
</dbReference>
<dbReference type="SMR" id="B2KEX0"/>
<dbReference type="STRING" id="445932.Emin_1519"/>
<dbReference type="KEGG" id="emi:Emin_1519"/>
<dbReference type="HOGENOM" id="CLU_010091_2_1_0"/>
<dbReference type="OrthoDB" id="9803053at2"/>
<dbReference type="Proteomes" id="UP000001029">
    <property type="component" value="Chromosome"/>
</dbReference>
<dbReference type="GO" id="GO:0005886">
    <property type="term" value="C:plasma membrane"/>
    <property type="evidence" value="ECO:0007669"/>
    <property type="project" value="UniProtKB-SubCell"/>
</dbReference>
<dbReference type="GO" id="GO:0045259">
    <property type="term" value="C:proton-transporting ATP synthase complex"/>
    <property type="evidence" value="ECO:0007669"/>
    <property type="project" value="UniProtKB-KW"/>
</dbReference>
<dbReference type="GO" id="GO:0043531">
    <property type="term" value="F:ADP binding"/>
    <property type="evidence" value="ECO:0007669"/>
    <property type="project" value="TreeGrafter"/>
</dbReference>
<dbReference type="GO" id="GO:0005524">
    <property type="term" value="F:ATP binding"/>
    <property type="evidence" value="ECO:0007669"/>
    <property type="project" value="UniProtKB-UniRule"/>
</dbReference>
<dbReference type="GO" id="GO:0046933">
    <property type="term" value="F:proton-transporting ATP synthase activity, rotational mechanism"/>
    <property type="evidence" value="ECO:0007669"/>
    <property type="project" value="UniProtKB-UniRule"/>
</dbReference>
<dbReference type="CDD" id="cd18113">
    <property type="entry name" value="ATP-synt_F1_alpha_C"/>
    <property type="match status" value="1"/>
</dbReference>
<dbReference type="CDD" id="cd18116">
    <property type="entry name" value="ATP-synt_F1_alpha_N"/>
    <property type="match status" value="1"/>
</dbReference>
<dbReference type="CDD" id="cd01132">
    <property type="entry name" value="F1-ATPase_alpha_CD"/>
    <property type="match status" value="1"/>
</dbReference>
<dbReference type="FunFam" id="1.20.150.20:FF:000001">
    <property type="entry name" value="ATP synthase subunit alpha"/>
    <property type="match status" value="1"/>
</dbReference>
<dbReference type="FunFam" id="2.40.30.20:FF:000001">
    <property type="entry name" value="ATP synthase subunit alpha"/>
    <property type="match status" value="1"/>
</dbReference>
<dbReference type="FunFam" id="3.40.50.300:FF:000002">
    <property type="entry name" value="ATP synthase subunit alpha"/>
    <property type="match status" value="1"/>
</dbReference>
<dbReference type="Gene3D" id="2.40.30.20">
    <property type="match status" value="1"/>
</dbReference>
<dbReference type="Gene3D" id="1.20.150.20">
    <property type="entry name" value="ATP synthase alpha/beta chain, C-terminal domain"/>
    <property type="match status" value="1"/>
</dbReference>
<dbReference type="Gene3D" id="3.40.50.300">
    <property type="entry name" value="P-loop containing nucleotide triphosphate hydrolases"/>
    <property type="match status" value="1"/>
</dbReference>
<dbReference type="HAMAP" id="MF_01346">
    <property type="entry name" value="ATP_synth_alpha_bact"/>
    <property type="match status" value="1"/>
</dbReference>
<dbReference type="InterPro" id="IPR023366">
    <property type="entry name" value="ATP_synth_asu-like_sf"/>
</dbReference>
<dbReference type="InterPro" id="IPR000793">
    <property type="entry name" value="ATP_synth_asu_C"/>
</dbReference>
<dbReference type="InterPro" id="IPR038376">
    <property type="entry name" value="ATP_synth_asu_C_sf"/>
</dbReference>
<dbReference type="InterPro" id="IPR033732">
    <property type="entry name" value="ATP_synth_F1_a_nt-bd_dom"/>
</dbReference>
<dbReference type="InterPro" id="IPR005294">
    <property type="entry name" value="ATP_synth_F1_asu"/>
</dbReference>
<dbReference type="InterPro" id="IPR020003">
    <property type="entry name" value="ATPase_a/bsu_AS"/>
</dbReference>
<dbReference type="InterPro" id="IPR004100">
    <property type="entry name" value="ATPase_F1/V1/A1_a/bsu_N"/>
</dbReference>
<dbReference type="InterPro" id="IPR036121">
    <property type="entry name" value="ATPase_F1/V1/A1_a/bsu_N_sf"/>
</dbReference>
<dbReference type="InterPro" id="IPR000194">
    <property type="entry name" value="ATPase_F1/V1/A1_a/bsu_nucl-bd"/>
</dbReference>
<dbReference type="InterPro" id="IPR027417">
    <property type="entry name" value="P-loop_NTPase"/>
</dbReference>
<dbReference type="NCBIfam" id="TIGR00962">
    <property type="entry name" value="atpA"/>
    <property type="match status" value="1"/>
</dbReference>
<dbReference type="NCBIfam" id="NF009884">
    <property type="entry name" value="PRK13343.1"/>
    <property type="match status" value="1"/>
</dbReference>
<dbReference type="PANTHER" id="PTHR48082">
    <property type="entry name" value="ATP SYNTHASE SUBUNIT ALPHA, MITOCHONDRIAL"/>
    <property type="match status" value="1"/>
</dbReference>
<dbReference type="PANTHER" id="PTHR48082:SF2">
    <property type="entry name" value="ATP SYNTHASE SUBUNIT ALPHA, MITOCHONDRIAL"/>
    <property type="match status" value="1"/>
</dbReference>
<dbReference type="Pfam" id="PF00006">
    <property type="entry name" value="ATP-synt_ab"/>
    <property type="match status" value="1"/>
</dbReference>
<dbReference type="Pfam" id="PF00306">
    <property type="entry name" value="ATP-synt_ab_C"/>
    <property type="match status" value="1"/>
</dbReference>
<dbReference type="Pfam" id="PF02874">
    <property type="entry name" value="ATP-synt_ab_N"/>
    <property type="match status" value="1"/>
</dbReference>
<dbReference type="PIRSF" id="PIRSF039088">
    <property type="entry name" value="F_ATPase_subunit_alpha"/>
    <property type="match status" value="1"/>
</dbReference>
<dbReference type="SUPFAM" id="SSF47917">
    <property type="entry name" value="C-terminal domain of alpha and beta subunits of F1 ATP synthase"/>
    <property type="match status" value="1"/>
</dbReference>
<dbReference type="SUPFAM" id="SSF50615">
    <property type="entry name" value="N-terminal domain of alpha and beta subunits of F1 ATP synthase"/>
    <property type="match status" value="1"/>
</dbReference>
<dbReference type="SUPFAM" id="SSF52540">
    <property type="entry name" value="P-loop containing nucleoside triphosphate hydrolases"/>
    <property type="match status" value="1"/>
</dbReference>
<dbReference type="PROSITE" id="PS00152">
    <property type="entry name" value="ATPASE_ALPHA_BETA"/>
    <property type="match status" value="1"/>
</dbReference>
<sequence>MSLKAEEITSIIKSKIANFTPQADINETGTVLQVGDGIARIYGLKNAVAGELLEFPNNVKGLALNLETDNIGCVLMGEDSSIQEGDPVKRTGQVINVPVGDALLGRVVDPLGKPLDGKGPIKTNSSRPLEIVAPGVIERQPVKQPLQTGLKAIDSLVPIGKGQRELIIGDRQTGKTAIAIDAILNQKNQPADQRTLCVYVAIGQKQSTVAQVVQTLTEFGAMEYTVIVSASAADPASLLYIAPYAGSSIAEEFMWNKRDVLIIYDDLSKHAQAYRQMSLLLRRPPGREAYPGDVFYLHSRLLERACKLSDKNGGGSITALPIIETQANDMSAYIPTNVISITDGQIYLESGLFHSGMKPAVNVGLSVSRVGGSAQKKIMRSVSGTLRLDMSQYKELEAFSQFGSDLDKESQQQLTRGKRINELFKQDQYTPMPVEEQVLVFFAGTNGFLDNIEVNLVKEYEKQLLTYFKAEKKDLFEELKNAPEMSENLTNKLKEALTAFGEVFKNSHSTAQ</sequence>
<name>ATPA_ELUMP</name>
<proteinExistence type="inferred from homology"/>
<comment type="function">
    <text evidence="1">Produces ATP from ADP in the presence of a proton gradient across the membrane. The alpha chain is a regulatory subunit.</text>
</comment>
<comment type="catalytic activity">
    <reaction evidence="1">
        <text>ATP + H2O + 4 H(+)(in) = ADP + phosphate + 5 H(+)(out)</text>
        <dbReference type="Rhea" id="RHEA:57720"/>
        <dbReference type="ChEBI" id="CHEBI:15377"/>
        <dbReference type="ChEBI" id="CHEBI:15378"/>
        <dbReference type="ChEBI" id="CHEBI:30616"/>
        <dbReference type="ChEBI" id="CHEBI:43474"/>
        <dbReference type="ChEBI" id="CHEBI:456216"/>
        <dbReference type="EC" id="7.1.2.2"/>
    </reaction>
</comment>
<comment type="subunit">
    <text evidence="1">F-type ATPases have 2 components, CF(1) - the catalytic core - and CF(0) - the membrane proton channel. CF(1) has five subunits: alpha(3), beta(3), gamma(1), delta(1), epsilon(1). CF(0) has three main subunits: a(1), b(2) and c(9-12). The alpha and beta chains form an alternating ring which encloses part of the gamma chain. CF(1) is attached to CF(0) by a central stalk formed by the gamma and epsilon chains, while a peripheral stalk is formed by the delta and b chains.</text>
</comment>
<comment type="subcellular location">
    <subcellularLocation>
        <location evidence="1">Cell membrane</location>
        <topology evidence="1">Peripheral membrane protein</topology>
    </subcellularLocation>
</comment>
<comment type="similarity">
    <text evidence="1">Belongs to the ATPase alpha/beta chains family.</text>
</comment>
<organism>
    <name type="scientific">Elusimicrobium minutum (strain Pei191)</name>
    <dbReference type="NCBI Taxonomy" id="445932"/>
    <lineage>
        <taxon>Bacteria</taxon>
        <taxon>Pseudomonadati</taxon>
        <taxon>Elusimicrobiota</taxon>
        <taxon>Elusimicrobia</taxon>
        <taxon>Elusimicrobiales</taxon>
        <taxon>Elusimicrobiaceae</taxon>
        <taxon>Elusimicrobium</taxon>
    </lineage>
</organism>
<evidence type="ECO:0000255" key="1">
    <source>
        <dbReference type="HAMAP-Rule" id="MF_01346"/>
    </source>
</evidence>